<accession>P62861</accession>
<accession>P35544</accession>
<accession>Q05472</accession>
<accession>Q95261</accession>
<accession>Q9H5V4</accession>
<sequence>MQLFVRAQELHTFEVTGQETVAQIKAHVASLEGIAPEDQVVLLAGAPLEDEATLGQCGVEALTTLEVAGRMLGGKVHGSLARAGKVRGQTPKVAKQEKKKKKTGRAKRRMQYNRRFVNVVPTFGKKKGPNANS</sequence>
<protein>
    <recommendedName>
        <fullName evidence="10">Ubiquitin-like FUBI-ribosomal protein eS30 fusion protein</fullName>
    </recommendedName>
    <alternativeName>
        <fullName evidence="12">FAU ubiquitin like and ribosomal protein S30 fusion</fullName>
    </alternativeName>
    <component>
        <recommendedName>
            <fullName>Ubiquitin-like protein FUBI</fullName>
        </recommendedName>
    </component>
    <component>
        <recommendedName>
            <fullName evidence="9">Small ribosomal subunit protein eS30</fullName>
        </recommendedName>
        <alternativeName>
            <fullName>40S ribosomal protein S30</fullName>
        </alternativeName>
    </component>
</protein>
<keyword id="KW-0002">3D-structure</keyword>
<keyword id="KW-0963">Cytoplasm</keyword>
<keyword id="KW-0903">Direct protein sequencing</keyword>
<keyword id="KW-0539">Nucleus</keyword>
<keyword id="KW-1267">Proteomics identification</keyword>
<keyword id="KW-1185">Reference proteome</keyword>
<keyword id="KW-0687">Ribonucleoprotein</keyword>
<keyword id="KW-0689">Ribosomal protein</keyword>
<name>RS30_HUMAN</name>
<organism>
    <name type="scientific">Homo sapiens</name>
    <name type="common">Human</name>
    <dbReference type="NCBI Taxonomy" id="9606"/>
    <lineage>
        <taxon>Eukaryota</taxon>
        <taxon>Metazoa</taxon>
        <taxon>Chordata</taxon>
        <taxon>Craniata</taxon>
        <taxon>Vertebrata</taxon>
        <taxon>Euteleostomi</taxon>
        <taxon>Mammalia</taxon>
        <taxon>Eutheria</taxon>
        <taxon>Euarchontoglires</taxon>
        <taxon>Primates</taxon>
        <taxon>Haplorrhini</taxon>
        <taxon>Catarrhini</taxon>
        <taxon>Hominidae</taxon>
        <taxon>Homo</taxon>
    </lineage>
</organism>
<dbReference type="EMBL" id="AP003068">
    <property type="status" value="NOT_ANNOTATED_CDS"/>
    <property type="molecule type" value="Genomic_DNA"/>
</dbReference>
<dbReference type="EMBL" id="X65923">
    <property type="protein sequence ID" value="CAA46716.1"/>
    <property type="molecule type" value="mRNA"/>
</dbReference>
<dbReference type="EMBL" id="X65921">
    <property type="protein sequence ID" value="CAA46714.1"/>
    <property type="molecule type" value="Genomic_DNA"/>
</dbReference>
<dbReference type="EMBL" id="AK026639">
    <property type="protein sequence ID" value="BAB15515.1"/>
    <property type="molecule type" value="mRNA"/>
</dbReference>
<dbReference type="EMBL" id="CR541974">
    <property type="protein sequence ID" value="CAG46772.1"/>
    <property type="molecule type" value="mRNA"/>
</dbReference>
<dbReference type="EMBL" id="AY398663">
    <property type="protein sequence ID" value="AAQ87877.1"/>
    <property type="molecule type" value="Genomic_DNA"/>
</dbReference>
<dbReference type="EMBL" id="BC033877">
    <property type="protein sequence ID" value="AAH33877.1"/>
    <property type="molecule type" value="mRNA"/>
</dbReference>
<dbReference type="CCDS" id="CCDS8095.1"/>
<dbReference type="PIR" id="JC1278">
    <property type="entry name" value="JC1278"/>
</dbReference>
<dbReference type="RefSeq" id="NP_001988.1">
    <property type="nucleotide sequence ID" value="NM_001997.5"/>
</dbReference>
<dbReference type="PDB" id="2L7R">
    <property type="method" value="NMR"/>
    <property type="chains" value="A=1-74"/>
</dbReference>
<dbReference type="PDB" id="4UG0">
    <property type="method" value="EM"/>
    <property type="chains" value="Se=75-133"/>
</dbReference>
<dbReference type="PDB" id="4V6X">
    <property type="method" value="EM"/>
    <property type="resolution" value="5.00 A"/>
    <property type="chains" value="Ae=75-133"/>
</dbReference>
<dbReference type="PDB" id="5A2Q">
    <property type="method" value="EM"/>
    <property type="resolution" value="3.90 A"/>
    <property type="chains" value="e=78-133"/>
</dbReference>
<dbReference type="PDB" id="5AJ0">
    <property type="method" value="EM"/>
    <property type="resolution" value="3.50 A"/>
    <property type="chains" value="Be=75-133"/>
</dbReference>
<dbReference type="PDB" id="5FLX">
    <property type="method" value="EM"/>
    <property type="resolution" value="3.90 A"/>
    <property type="chains" value="e=75-133"/>
</dbReference>
<dbReference type="PDB" id="5OA3">
    <property type="method" value="EM"/>
    <property type="resolution" value="4.30 A"/>
    <property type="chains" value="e=78-133"/>
</dbReference>
<dbReference type="PDB" id="5T2C">
    <property type="method" value="EM"/>
    <property type="resolution" value="3.60 A"/>
    <property type="chains" value="AT=75-133"/>
</dbReference>
<dbReference type="PDB" id="6FEC">
    <property type="method" value="EM"/>
    <property type="resolution" value="6.30 A"/>
    <property type="chains" value="V=75-133"/>
</dbReference>
<dbReference type="PDB" id="6G18">
    <property type="method" value="EM"/>
    <property type="resolution" value="3.60 A"/>
    <property type="chains" value="e=75-133"/>
</dbReference>
<dbReference type="PDB" id="6G4S">
    <property type="method" value="EM"/>
    <property type="resolution" value="4.00 A"/>
    <property type="chains" value="e=75-133"/>
</dbReference>
<dbReference type="PDB" id="6G4W">
    <property type="method" value="EM"/>
    <property type="resolution" value="4.50 A"/>
    <property type="chains" value="e=75-133"/>
</dbReference>
<dbReference type="PDB" id="6G51">
    <property type="method" value="EM"/>
    <property type="resolution" value="4.10 A"/>
    <property type="chains" value="e=75-133"/>
</dbReference>
<dbReference type="PDB" id="6G53">
    <property type="method" value="EM"/>
    <property type="resolution" value="4.50 A"/>
    <property type="chains" value="e=75-133"/>
</dbReference>
<dbReference type="PDB" id="6G5H">
    <property type="method" value="EM"/>
    <property type="resolution" value="3.60 A"/>
    <property type="chains" value="e=75-133"/>
</dbReference>
<dbReference type="PDB" id="6G5I">
    <property type="method" value="EM"/>
    <property type="resolution" value="3.50 A"/>
    <property type="chains" value="e=75-133"/>
</dbReference>
<dbReference type="PDB" id="6IP5">
    <property type="method" value="EM"/>
    <property type="resolution" value="3.90 A"/>
    <property type="chains" value="3Q=75-133"/>
</dbReference>
<dbReference type="PDB" id="6IP6">
    <property type="method" value="EM"/>
    <property type="resolution" value="4.50 A"/>
    <property type="chains" value="3Q=75-133"/>
</dbReference>
<dbReference type="PDB" id="6IP8">
    <property type="method" value="EM"/>
    <property type="resolution" value="3.90 A"/>
    <property type="chains" value="3Q=75-133"/>
</dbReference>
<dbReference type="PDB" id="6OLE">
    <property type="method" value="EM"/>
    <property type="resolution" value="3.10 A"/>
    <property type="chains" value="Se=76-132"/>
</dbReference>
<dbReference type="PDB" id="6OLF">
    <property type="method" value="EM"/>
    <property type="resolution" value="3.90 A"/>
    <property type="chains" value="Se=76-132"/>
</dbReference>
<dbReference type="PDB" id="6OLG">
    <property type="method" value="EM"/>
    <property type="resolution" value="3.40 A"/>
    <property type="chains" value="Be=77-131"/>
</dbReference>
<dbReference type="PDB" id="6OLI">
    <property type="method" value="EM"/>
    <property type="resolution" value="3.50 A"/>
    <property type="chains" value="Se=76-132"/>
</dbReference>
<dbReference type="PDB" id="6OLZ">
    <property type="method" value="EM"/>
    <property type="resolution" value="3.90 A"/>
    <property type="chains" value="Be=77-131"/>
</dbReference>
<dbReference type="PDB" id="6OM0">
    <property type="method" value="EM"/>
    <property type="resolution" value="3.10 A"/>
    <property type="chains" value="Se=76-132"/>
</dbReference>
<dbReference type="PDB" id="6OM7">
    <property type="method" value="EM"/>
    <property type="resolution" value="3.70 A"/>
    <property type="chains" value="Se=76-132"/>
</dbReference>
<dbReference type="PDB" id="6QZP">
    <property type="method" value="EM"/>
    <property type="resolution" value="2.90 A"/>
    <property type="chains" value="Se=76-133"/>
</dbReference>
<dbReference type="PDB" id="6Y0G">
    <property type="method" value="EM"/>
    <property type="resolution" value="3.20 A"/>
    <property type="chains" value="Se=75-133"/>
</dbReference>
<dbReference type="PDB" id="6Y2L">
    <property type="method" value="EM"/>
    <property type="resolution" value="3.00 A"/>
    <property type="chains" value="Se=75-133"/>
</dbReference>
<dbReference type="PDB" id="6Y57">
    <property type="method" value="EM"/>
    <property type="resolution" value="3.50 A"/>
    <property type="chains" value="Se=75-133"/>
</dbReference>
<dbReference type="PDB" id="6YBW">
    <property type="method" value="EM"/>
    <property type="resolution" value="3.10 A"/>
    <property type="chains" value="F=75-133"/>
</dbReference>
<dbReference type="PDB" id="6Z6L">
    <property type="method" value="EM"/>
    <property type="resolution" value="3.00 A"/>
    <property type="chains" value="Se=75-133"/>
</dbReference>
<dbReference type="PDB" id="6Z6M">
    <property type="method" value="EM"/>
    <property type="resolution" value="3.10 A"/>
    <property type="chains" value="Se=75-133"/>
</dbReference>
<dbReference type="PDB" id="6Z6N">
    <property type="method" value="EM"/>
    <property type="resolution" value="2.90 A"/>
    <property type="chains" value="Se=75-133"/>
</dbReference>
<dbReference type="PDB" id="6ZLW">
    <property type="method" value="EM"/>
    <property type="resolution" value="2.60 A"/>
    <property type="chains" value="e=75-133"/>
</dbReference>
<dbReference type="PDB" id="6ZM7">
    <property type="method" value="EM"/>
    <property type="resolution" value="2.70 A"/>
    <property type="chains" value="Se=75-133"/>
</dbReference>
<dbReference type="PDB" id="6ZME">
    <property type="method" value="EM"/>
    <property type="resolution" value="3.00 A"/>
    <property type="chains" value="Se=75-133"/>
</dbReference>
<dbReference type="PDB" id="6ZMI">
    <property type="method" value="EM"/>
    <property type="resolution" value="2.60 A"/>
    <property type="chains" value="Se=75-133"/>
</dbReference>
<dbReference type="PDB" id="6ZMO">
    <property type="method" value="EM"/>
    <property type="resolution" value="3.10 A"/>
    <property type="chains" value="Se=75-133"/>
</dbReference>
<dbReference type="PDB" id="6ZMT">
    <property type="method" value="EM"/>
    <property type="resolution" value="3.00 A"/>
    <property type="chains" value="e=75-133"/>
</dbReference>
<dbReference type="PDB" id="6ZMW">
    <property type="method" value="EM"/>
    <property type="resolution" value="3.70 A"/>
    <property type="chains" value="F=75-133"/>
</dbReference>
<dbReference type="PDB" id="6ZN5">
    <property type="method" value="EM"/>
    <property type="resolution" value="3.20 A"/>
    <property type="chains" value="e=78-133"/>
</dbReference>
<dbReference type="PDB" id="6ZOJ">
    <property type="method" value="EM"/>
    <property type="resolution" value="2.80 A"/>
    <property type="chains" value="e=78-133"/>
</dbReference>
<dbReference type="PDB" id="6ZOK">
    <property type="method" value="EM"/>
    <property type="resolution" value="2.80 A"/>
    <property type="chains" value="e=78-133"/>
</dbReference>
<dbReference type="PDB" id="6ZON">
    <property type="method" value="EM"/>
    <property type="resolution" value="3.00 A"/>
    <property type="chains" value="T=75-133"/>
</dbReference>
<dbReference type="PDB" id="6ZP4">
    <property type="method" value="EM"/>
    <property type="resolution" value="2.90 A"/>
    <property type="chains" value="T=75-133"/>
</dbReference>
<dbReference type="PDB" id="6ZUO">
    <property type="method" value="EM"/>
    <property type="resolution" value="3.10 A"/>
    <property type="chains" value="e=75-133"/>
</dbReference>
<dbReference type="PDB" id="6ZV6">
    <property type="method" value="EM"/>
    <property type="resolution" value="2.90 A"/>
    <property type="chains" value="e=75-133"/>
</dbReference>
<dbReference type="PDB" id="6ZVH">
    <property type="method" value="EM"/>
    <property type="resolution" value="2.90 A"/>
    <property type="chains" value="e=76-117"/>
</dbReference>
<dbReference type="PDB" id="6ZVJ">
    <property type="method" value="EM"/>
    <property type="resolution" value="3.80 A"/>
    <property type="chains" value="T=81-124"/>
</dbReference>
<dbReference type="PDB" id="6ZXD">
    <property type="method" value="EM"/>
    <property type="resolution" value="3.20 A"/>
    <property type="chains" value="e=75-133"/>
</dbReference>
<dbReference type="PDB" id="6ZXE">
    <property type="method" value="EM"/>
    <property type="resolution" value="3.00 A"/>
    <property type="chains" value="e=75-133"/>
</dbReference>
<dbReference type="PDB" id="6ZXF">
    <property type="method" value="EM"/>
    <property type="resolution" value="3.70 A"/>
    <property type="chains" value="e=75-133"/>
</dbReference>
<dbReference type="PDB" id="6ZXG">
    <property type="method" value="EM"/>
    <property type="resolution" value="2.60 A"/>
    <property type="chains" value="e=75-133"/>
</dbReference>
<dbReference type="PDB" id="6ZXH">
    <property type="method" value="EM"/>
    <property type="resolution" value="2.70 A"/>
    <property type="chains" value="e=75-133"/>
</dbReference>
<dbReference type="PDB" id="7A09">
    <property type="method" value="EM"/>
    <property type="resolution" value="3.50 A"/>
    <property type="chains" value="T=75-133"/>
</dbReference>
<dbReference type="PDB" id="7K5I">
    <property type="method" value="EM"/>
    <property type="resolution" value="2.90 A"/>
    <property type="chains" value="e=75-133"/>
</dbReference>
<dbReference type="PDB" id="7QP6">
    <property type="method" value="EM"/>
    <property type="resolution" value="4.70 A"/>
    <property type="chains" value="F=75-133"/>
</dbReference>
<dbReference type="PDB" id="7QP7">
    <property type="method" value="EM"/>
    <property type="resolution" value="3.70 A"/>
    <property type="chains" value="F=75-133"/>
</dbReference>
<dbReference type="PDB" id="7R4X">
    <property type="method" value="EM"/>
    <property type="resolution" value="2.15 A"/>
    <property type="chains" value="e=75-133"/>
</dbReference>
<dbReference type="PDB" id="7TQL">
    <property type="method" value="EM"/>
    <property type="resolution" value="3.40 A"/>
    <property type="chains" value="e=81-133"/>
</dbReference>
<dbReference type="PDB" id="7WTS">
    <property type="method" value="EM"/>
    <property type="resolution" value="3.20 A"/>
    <property type="chains" value="e=75-133"/>
</dbReference>
<dbReference type="PDB" id="7WTT">
    <property type="method" value="EM"/>
    <property type="resolution" value="3.10 A"/>
    <property type="chains" value="e=75-133"/>
</dbReference>
<dbReference type="PDB" id="7WTU">
    <property type="method" value="EM"/>
    <property type="resolution" value="3.00 A"/>
    <property type="chains" value="e=75-133"/>
</dbReference>
<dbReference type="PDB" id="7WTV">
    <property type="method" value="EM"/>
    <property type="resolution" value="3.50 A"/>
    <property type="chains" value="e=75-133"/>
</dbReference>
<dbReference type="PDB" id="7WTW">
    <property type="method" value="EM"/>
    <property type="resolution" value="3.20 A"/>
    <property type="chains" value="e=75-133"/>
</dbReference>
<dbReference type="PDB" id="7WTX">
    <property type="method" value="EM"/>
    <property type="resolution" value="3.10 A"/>
    <property type="chains" value="e=75-133"/>
</dbReference>
<dbReference type="PDB" id="7WTZ">
    <property type="method" value="EM"/>
    <property type="resolution" value="3.00 A"/>
    <property type="chains" value="e=75-133"/>
</dbReference>
<dbReference type="PDB" id="7WU0">
    <property type="method" value="EM"/>
    <property type="resolution" value="3.30 A"/>
    <property type="chains" value="e=75-133"/>
</dbReference>
<dbReference type="PDB" id="7XNX">
    <property type="method" value="EM"/>
    <property type="resolution" value="2.70 A"/>
    <property type="chains" value="Se=75-133"/>
</dbReference>
<dbReference type="PDB" id="7XNY">
    <property type="method" value="EM"/>
    <property type="resolution" value="2.50 A"/>
    <property type="chains" value="Se=75-133"/>
</dbReference>
<dbReference type="PDB" id="8BS3">
    <property type="method" value="X-ray"/>
    <property type="resolution" value="2.20 A"/>
    <property type="chains" value="B=1-73"/>
</dbReference>
<dbReference type="PDB" id="8G5Y">
    <property type="method" value="EM"/>
    <property type="resolution" value="2.29 A"/>
    <property type="chains" value="Se=1-133"/>
</dbReference>
<dbReference type="PDB" id="8G5Z">
    <property type="method" value="EM"/>
    <property type="resolution" value="2.64 A"/>
    <property type="chains" value="Se=75-133"/>
</dbReference>
<dbReference type="PDB" id="8G60">
    <property type="method" value="EM"/>
    <property type="resolution" value="2.54 A"/>
    <property type="chains" value="Se=1-133"/>
</dbReference>
<dbReference type="PDB" id="8G61">
    <property type="method" value="EM"/>
    <property type="resolution" value="2.94 A"/>
    <property type="chains" value="Se=1-133"/>
</dbReference>
<dbReference type="PDB" id="8G6J">
    <property type="method" value="EM"/>
    <property type="resolution" value="2.80 A"/>
    <property type="chains" value="Se=1-133"/>
</dbReference>
<dbReference type="PDB" id="8GLP">
    <property type="method" value="EM"/>
    <property type="resolution" value="1.67 A"/>
    <property type="chains" value="Se=1-133"/>
</dbReference>
<dbReference type="PDB" id="8IFD">
    <property type="method" value="EM"/>
    <property type="resolution" value="2.59 A"/>
    <property type="chains" value="3Q=75-133"/>
</dbReference>
<dbReference type="PDB" id="8IFE">
    <property type="method" value="EM"/>
    <property type="resolution" value="2.57 A"/>
    <property type="chains" value="3Q=75-133"/>
</dbReference>
<dbReference type="PDB" id="8JDJ">
    <property type="method" value="EM"/>
    <property type="resolution" value="2.50 A"/>
    <property type="chains" value="AQ=75-133"/>
</dbReference>
<dbReference type="PDB" id="8JDK">
    <property type="method" value="EM"/>
    <property type="resolution" value="2.26 A"/>
    <property type="chains" value="AQ=75-133"/>
</dbReference>
<dbReference type="PDB" id="8JDL">
    <property type="method" value="EM"/>
    <property type="resolution" value="2.42 A"/>
    <property type="chains" value="AQ=75-133"/>
</dbReference>
<dbReference type="PDB" id="8JDM">
    <property type="method" value="EM"/>
    <property type="resolution" value="2.67 A"/>
    <property type="chains" value="AQ=75-133"/>
</dbReference>
<dbReference type="PDB" id="8K2C">
    <property type="method" value="EM"/>
    <property type="resolution" value="2.40 A"/>
    <property type="chains" value="Se=75-133"/>
</dbReference>
<dbReference type="PDB" id="8OZ0">
    <property type="method" value="EM"/>
    <property type="resolution" value="3.50 A"/>
    <property type="chains" value="b=75-133"/>
</dbReference>
<dbReference type="PDB" id="8PJ1">
    <property type="method" value="EM"/>
    <property type="resolution" value="3.40 A"/>
    <property type="chains" value="F=75-133"/>
</dbReference>
<dbReference type="PDB" id="8PJ2">
    <property type="method" value="EM"/>
    <property type="resolution" value="3.40 A"/>
    <property type="chains" value="F=75-133"/>
</dbReference>
<dbReference type="PDB" id="8PJ3">
    <property type="method" value="EM"/>
    <property type="resolution" value="3.70 A"/>
    <property type="chains" value="F=1-133"/>
</dbReference>
<dbReference type="PDB" id="8PJ4">
    <property type="method" value="EM"/>
    <property type="resolution" value="3.20 A"/>
    <property type="chains" value="F=1-133"/>
</dbReference>
<dbReference type="PDB" id="8PJ5">
    <property type="method" value="EM"/>
    <property type="resolution" value="2.90 A"/>
    <property type="chains" value="F=75-133"/>
</dbReference>
<dbReference type="PDB" id="8PJ6">
    <property type="method" value="EM"/>
    <property type="resolution" value="2.90 A"/>
    <property type="chains" value="F=75-133"/>
</dbReference>
<dbReference type="PDB" id="8PPK">
    <property type="method" value="EM"/>
    <property type="resolution" value="2.98 A"/>
    <property type="chains" value="e=1-133"/>
</dbReference>
<dbReference type="PDB" id="8PPL">
    <property type="method" value="EM"/>
    <property type="resolution" value="2.65 A"/>
    <property type="chains" value="Ae=1-133"/>
</dbReference>
<dbReference type="PDB" id="8QOI">
    <property type="method" value="EM"/>
    <property type="resolution" value="1.90 A"/>
    <property type="chains" value="Se=1-133"/>
</dbReference>
<dbReference type="PDB" id="8T4S">
    <property type="method" value="EM"/>
    <property type="resolution" value="2.60 A"/>
    <property type="chains" value="e=1-133"/>
</dbReference>
<dbReference type="PDB" id="8UKB">
    <property type="method" value="EM"/>
    <property type="resolution" value="3.05 A"/>
    <property type="chains" value="Se=76-133"/>
</dbReference>
<dbReference type="PDB" id="8XP2">
    <property type="method" value="EM"/>
    <property type="resolution" value="3.20 A"/>
    <property type="chains" value="Se=75-133"/>
</dbReference>
<dbReference type="PDB" id="8XP3">
    <property type="method" value="EM"/>
    <property type="resolution" value="3.40 A"/>
    <property type="chains" value="Se=75-133"/>
</dbReference>
<dbReference type="PDB" id="8XSX">
    <property type="method" value="EM"/>
    <property type="resolution" value="2.40 A"/>
    <property type="chains" value="Se=75-133"/>
</dbReference>
<dbReference type="PDB" id="8XSY">
    <property type="method" value="EM"/>
    <property type="resolution" value="3.00 A"/>
    <property type="chains" value="Se=75-133"/>
</dbReference>
<dbReference type="PDB" id="8XSZ">
    <property type="method" value="EM"/>
    <property type="resolution" value="3.20 A"/>
    <property type="chains" value="Se=75-133"/>
</dbReference>
<dbReference type="PDB" id="8XXL">
    <property type="method" value="EM"/>
    <property type="resolution" value="2.90 A"/>
    <property type="chains" value="Se=75-133"/>
</dbReference>
<dbReference type="PDB" id="8XXM">
    <property type="method" value="EM"/>
    <property type="resolution" value="3.20 A"/>
    <property type="chains" value="Se=75-133"/>
</dbReference>
<dbReference type="PDB" id="8XXN">
    <property type="method" value="EM"/>
    <property type="resolution" value="3.60 A"/>
    <property type="chains" value="Se=75-133"/>
</dbReference>
<dbReference type="PDB" id="8Y0W">
    <property type="method" value="EM"/>
    <property type="resolution" value="3.40 A"/>
    <property type="chains" value="Se=75-133"/>
</dbReference>
<dbReference type="PDB" id="8Y0X">
    <property type="method" value="EM"/>
    <property type="resolution" value="3.30 A"/>
    <property type="chains" value="Se=75-133"/>
</dbReference>
<dbReference type="PDB" id="8YOO">
    <property type="method" value="EM"/>
    <property type="resolution" value="2.00 A"/>
    <property type="chains" value="Se=75-133"/>
</dbReference>
<dbReference type="PDB" id="8YOP">
    <property type="method" value="EM"/>
    <property type="resolution" value="2.20 A"/>
    <property type="chains" value="Se=75-133"/>
</dbReference>
<dbReference type="PDB" id="8ZDB">
    <property type="method" value="EM"/>
    <property type="resolution" value="3.60 A"/>
    <property type="chains" value="e=75-133"/>
</dbReference>
<dbReference type="PDB" id="9BKD">
    <property type="method" value="EM"/>
    <property type="resolution" value="2.60 A"/>
    <property type="chains" value="F=75-133"/>
</dbReference>
<dbReference type="PDB" id="9BLN">
    <property type="method" value="EM"/>
    <property type="resolution" value="3.90 A"/>
    <property type="chains" value="F=75-133"/>
</dbReference>
<dbReference type="PDB" id="9C3H">
    <property type="method" value="EM"/>
    <property type="resolution" value="2.00 A"/>
    <property type="chains" value="Se=1-133"/>
</dbReference>
<dbReference type="PDB" id="9G8M">
    <property type="method" value="EM"/>
    <property type="resolution" value="3.30 A"/>
    <property type="chains" value="Se=75-133"/>
</dbReference>
<dbReference type="PDB" id="9G8O">
    <property type="method" value="EM"/>
    <property type="resolution" value="3.40 A"/>
    <property type="chains" value="Se=75-133"/>
</dbReference>
<dbReference type="PDBsum" id="2L7R"/>
<dbReference type="PDBsum" id="4UG0"/>
<dbReference type="PDBsum" id="4V6X"/>
<dbReference type="PDBsum" id="5A2Q"/>
<dbReference type="PDBsum" id="5AJ0"/>
<dbReference type="PDBsum" id="5FLX"/>
<dbReference type="PDBsum" id="5OA3"/>
<dbReference type="PDBsum" id="5T2C"/>
<dbReference type="PDBsum" id="6FEC"/>
<dbReference type="PDBsum" id="6G18"/>
<dbReference type="PDBsum" id="6G4S"/>
<dbReference type="PDBsum" id="6G4W"/>
<dbReference type="PDBsum" id="6G51"/>
<dbReference type="PDBsum" id="6G53"/>
<dbReference type="PDBsum" id="6G5H"/>
<dbReference type="PDBsum" id="6G5I"/>
<dbReference type="PDBsum" id="6IP5"/>
<dbReference type="PDBsum" id="6IP6"/>
<dbReference type="PDBsum" id="6IP8"/>
<dbReference type="PDBsum" id="6OLE"/>
<dbReference type="PDBsum" id="6OLF"/>
<dbReference type="PDBsum" id="6OLG"/>
<dbReference type="PDBsum" id="6OLI"/>
<dbReference type="PDBsum" id="6OLZ"/>
<dbReference type="PDBsum" id="6OM0"/>
<dbReference type="PDBsum" id="6OM7"/>
<dbReference type="PDBsum" id="6QZP"/>
<dbReference type="PDBsum" id="6Y0G"/>
<dbReference type="PDBsum" id="6Y2L"/>
<dbReference type="PDBsum" id="6Y57"/>
<dbReference type="PDBsum" id="6YBW"/>
<dbReference type="PDBsum" id="6Z6L"/>
<dbReference type="PDBsum" id="6Z6M"/>
<dbReference type="PDBsum" id="6Z6N"/>
<dbReference type="PDBsum" id="6ZLW"/>
<dbReference type="PDBsum" id="6ZM7"/>
<dbReference type="PDBsum" id="6ZME"/>
<dbReference type="PDBsum" id="6ZMI"/>
<dbReference type="PDBsum" id="6ZMO"/>
<dbReference type="PDBsum" id="6ZMT"/>
<dbReference type="PDBsum" id="6ZMW"/>
<dbReference type="PDBsum" id="6ZN5"/>
<dbReference type="PDBsum" id="6ZOJ"/>
<dbReference type="PDBsum" id="6ZOK"/>
<dbReference type="PDBsum" id="6ZON"/>
<dbReference type="PDBsum" id="6ZP4"/>
<dbReference type="PDBsum" id="6ZUO"/>
<dbReference type="PDBsum" id="6ZV6"/>
<dbReference type="PDBsum" id="6ZVH"/>
<dbReference type="PDBsum" id="6ZVJ"/>
<dbReference type="PDBsum" id="6ZXD"/>
<dbReference type="PDBsum" id="6ZXE"/>
<dbReference type="PDBsum" id="6ZXF"/>
<dbReference type="PDBsum" id="6ZXG"/>
<dbReference type="PDBsum" id="6ZXH"/>
<dbReference type="PDBsum" id="7A09"/>
<dbReference type="PDBsum" id="7K5I"/>
<dbReference type="PDBsum" id="7QP6"/>
<dbReference type="PDBsum" id="7QP7"/>
<dbReference type="PDBsum" id="7R4X"/>
<dbReference type="PDBsum" id="7TQL"/>
<dbReference type="PDBsum" id="7WTS"/>
<dbReference type="PDBsum" id="7WTT"/>
<dbReference type="PDBsum" id="7WTU"/>
<dbReference type="PDBsum" id="7WTV"/>
<dbReference type="PDBsum" id="7WTW"/>
<dbReference type="PDBsum" id="7WTX"/>
<dbReference type="PDBsum" id="7WTZ"/>
<dbReference type="PDBsum" id="7WU0"/>
<dbReference type="PDBsum" id="7XNX"/>
<dbReference type="PDBsum" id="7XNY"/>
<dbReference type="PDBsum" id="8BS3"/>
<dbReference type="PDBsum" id="8G5Y"/>
<dbReference type="PDBsum" id="8G5Z"/>
<dbReference type="PDBsum" id="8G60"/>
<dbReference type="PDBsum" id="8G61"/>
<dbReference type="PDBsum" id="8G6J"/>
<dbReference type="PDBsum" id="8GLP"/>
<dbReference type="PDBsum" id="8IFD"/>
<dbReference type="PDBsum" id="8IFE"/>
<dbReference type="PDBsum" id="8JDJ"/>
<dbReference type="PDBsum" id="8JDK"/>
<dbReference type="PDBsum" id="8JDL"/>
<dbReference type="PDBsum" id="8JDM"/>
<dbReference type="PDBsum" id="8K2C"/>
<dbReference type="PDBsum" id="8OZ0"/>
<dbReference type="PDBsum" id="8PJ1"/>
<dbReference type="PDBsum" id="8PJ2"/>
<dbReference type="PDBsum" id="8PJ3"/>
<dbReference type="PDBsum" id="8PJ4"/>
<dbReference type="PDBsum" id="8PJ5"/>
<dbReference type="PDBsum" id="8PJ6"/>
<dbReference type="PDBsum" id="8PPK"/>
<dbReference type="PDBsum" id="8PPL"/>
<dbReference type="PDBsum" id="8QOI"/>
<dbReference type="PDBsum" id="8T4S"/>
<dbReference type="PDBsum" id="8UKB"/>
<dbReference type="PDBsum" id="8XP2"/>
<dbReference type="PDBsum" id="8XP3"/>
<dbReference type="PDBsum" id="8XSX"/>
<dbReference type="PDBsum" id="8XSY"/>
<dbReference type="PDBsum" id="8XSZ"/>
<dbReference type="PDBsum" id="8XXL"/>
<dbReference type="PDBsum" id="8XXM"/>
<dbReference type="PDBsum" id="8XXN"/>
<dbReference type="PDBsum" id="8Y0W"/>
<dbReference type="PDBsum" id="8Y0X"/>
<dbReference type="PDBsum" id="8YOO"/>
<dbReference type="PDBsum" id="8YOP"/>
<dbReference type="PDBsum" id="8ZDB"/>
<dbReference type="PDBsum" id="9BKD"/>
<dbReference type="PDBsum" id="9BLN"/>
<dbReference type="PDBsum" id="9C3H"/>
<dbReference type="PDBsum" id="9G8M"/>
<dbReference type="PDBsum" id="9G8O"/>
<dbReference type="EMDB" id="EMD-10668"/>
<dbReference type="EMDB" id="EMD-10674"/>
<dbReference type="EMDB" id="EMD-10690"/>
<dbReference type="EMDB" id="EMD-10775"/>
<dbReference type="EMDB" id="EMD-11098"/>
<dbReference type="EMDB" id="EMD-11099"/>
<dbReference type="EMDB" id="EMD-11100"/>
<dbReference type="EMDB" id="EMD-11276"/>
<dbReference type="EMDB" id="EMD-11288"/>
<dbReference type="EMDB" id="EMD-11289"/>
<dbReference type="EMDB" id="EMD-11292"/>
<dbReference type="EMDB" id="EMD-11299"/>
<dbReference type="EMDB" id="EMD-11301"/>
<dbReference type="EMDB" id="EMD-11302"/>
<dbReference type="EMDB" id="EMD-11310"/>
<dbReference type="EMDB" id="EMD-11320"/>
<dbReference type="EMDB" id="EMD-11321"/>
<dbReference type="EMDB" id="EMD-11325"/>
<dbReference type="EMDB" id="EMD-11335"/>
<dbReference type="EMDB" id="EMD-11440"/>
<dbReference type="EMDB" id="EMD-11441"/>
<dbReference type="EMDB" id="EMD-11456"/>
<dbReference type="EMDB" id="EMD-11458"/>
<dbReference type="EMDB" id="EMD-11517"/>
<dbReference type="EMDB" id="EMD-11518"/>
<dbReference type="EMDB" id="EMD-11519"/>
<dbReference type="EMDB" id="EMD-11520"/>
<dbReference type="EMDB" id="EMD-11521"/>
<dbReference type="EMDB" id="EMD-11602"/>
<dbReference type="EMDB" id="EMD-14113"/>
<dbReference type="EMDB" id="EMD-14114"/>
<dbReference type="EMDB" id="EMD-14317"/>
<dbReference type="EMDB" id="EMD-17297"/>
<dbReference type="EMDB" id="EMD-17696"/>
<dbReference type="EMDB" id="EMD-17697"/>
<dbReference type="EMDB" id="EMD-17698"/>
<dbReference type="EMDB" id="EMD-17699"/>
<dbReference type="EMDB" id="EMD-17700"/>
<dbReference type="EMDB" id="EMD-17701"/>
<dbReference type="EMDB" id="EMD-17804"/>
<dbReference type="EMDB" id="EMD-17805"/>
<dbReference type="EMDB" id="EMD-18539"/>
<dbReference type="EMDB" id="EMD-22681"/>
<dbReference type="EMDB" id="EMD-26067"/>
<dbReference type="EMDB" id="EMD-29757"/>
<dbReference type="EMDB" id="EMD-29758"/>
<dbReference type="EMDB" id="EMD-29759"/>
<dbReference type="EMDB" id="EMD-29760"/>
<dbReference type="EMDB" id="EMD-29771"/>
<dbReference type="EMDB" id="EMD-32799"/>
<dbReference type="EMDB" id="EMD-32800"/>
<dbReference type="EMDB" id="EMD-32801"/>
<dbReference type="EMDB" id="EMD-32802"/>
<dbReference type="EMDB" id="EMD-32803"/>
<dbReference type="EMDB" id="EMD-32804"/>
<dbReference type="EMDB" id="EMD-32806"/>
<dbReference type="EMDB" id="EMD-32807"/>
<dbReference type="EMDB" id="EMD-33329"/>
<dbReference type="EMDB" id="EMD-33330"/>
<dbReference type="EMDB" id="EMD-35413"/>
<dbReference type="EMDB" id="EMD-35414"/>
<dbReference type="EMDB" id="EMD-36178"/>
<dbReference type="EMDB" id="EMD-36179"/>
<dbReference type="EMDB" id="EMD-36180"/>
<dbReference type="EMDB" id="EMD-36181"/>
<dbReference type="EMDB" id="EMD-36838"/>
<dbReference type="EMDB" id="EMD-3770"/>
<dbReference type="EMDB" id="EMD-38548"/>
<dbReference type="EMDB" id="EMD-38549"/>
<dbReference type="EMDB" id="EMD-38629"/>
<dbReference type="EMDB" id="EMD-38630"/>
<dbReference type="EMDB" id="EMD-38631"/>
<dbReference type="EMDB" id="EMD-38752"/>
<dbReference type="EMDB" id="EMD-38753"/>
<dbReference type="EMDB" id="EMD-38754"/>
<dbReference type="EMDB" id="EMD-39455"/>
<dbReference type="EMDB" id="EMD-39456"/>
<dbReference type="EMDB" id="EMD-39956"/>
<dbReference type="EMDB" id="EMD-40205"/>
<dbReference type="EMDB" id="EMD-41039"/>
<dbReference type="EMDB" id="EMD-42351"/>
<dbReference type="EMDB" id="EMD-4242"/>
<dbReference type="EMDB" id="EMD-4337"/>
<dbReference type="EMDB" id="EMD-4348"/>
<dbReference type="EMDB" id="EMD-4349"/>
<dbReference type="EMDB" id="EMD-4350"/>
<dbReference type="EMDB" id="EMD-4351"/>
<dbReference type="EMDB" id="EMD-4352"/>
<dbReference type="EMDB" id="EMD-4353"/>
<dbReference type="EMDB" id="EMD-44641"/>
<dbReference type="EMDB" id="EMD-44671"/>
<dbReference type="EMDB" id="EMD-45170"/>
<dbReference type="EMDB" id="EMD-51132"/>
<dbReference type="EMDB" id="EMD-51134"/>
<dbReference type="EMDB" id="EMD-9701"/>
<dbReference type="EMDB" id="EMD-9702"/>
<dbReference type="EMDB" id="EMD-9703"/>
<dbReference type="SMR" id="P62861"/>
<dbReference type="BioGRID" id="108491">
    <property type="interactions" value="334"/>
</dbReference>
<dbReference type="ComplexPortal" id="CPX-5223">
    <property type="entry name" value="40S cytosolic small ribosomal subunit"/>
</dbReference>
<dbReference type="CORUM" id="P62861"/>
<dbReference type="FunCoup" id="P62861">
    <property type="interactions" value="1340"/>
</dbReference>
<dbReference type="IntAct" id="P62861">
    <property type="interactions" value="99"/>
</dbReference>
<dbReference type="MINT" id="P62861"/>
<dbReference type="STRING" id="9606.ENSP00000431822"/>
<dbReference type="GlyGen" id="P62861">
    <property type="glycosylation" value="1 site, 1 O-linked glycan (1 site)"/>
</dbReference>
<dbReference type="iPTMnet" id="P62861"/>
<dbReference type="PhosphoSitePlus" id="P62861"/>
<dbReference type="SwissPalm" id="P62861"/>
<dbReference type="BioMuta" id="FAU"/>
<dbReference type="DMDM" id="549147"/>
<dbReference type="jPOST" id="P62861"/>
<dbReference type="MassIVE" id="P62861"/>
<dbReference type="PaxDb" id="9606-ENSP00000435370"/>
<dbReference type="PeptideAtlas" id="P62861"/>
<dbReference type="ProteomicsDB" id="55079"/>
<dbReference type="ProteomicsDB" id="57440"/>
<dbReference type="Pumba" id="P62861"/>
<dbReference type="TopDownProteomics" id="P62861"/>
<dbReference type="Antibodypedia" id="29676">
    <property type="antibodies" value="376 antibodies from 31 providers"/>
</dbReference>
<dbReference type="DNASU" id="2197"/>
<dbReference type="Ensembl" id="ENST00000527548.5">
    <property type="protein sequence ID" value="ENSP00000434440.1"/>
    <property type="gene ID" value="ENSG00000149806.11"/>
</dbReference>
<dbReference type="Ensembl" id="ENST00000529639.6">
    <property type="protein sequence ID" value="ENSP00000435370.1"/>
    <property type="gene ID" value="ENSG00000149806.11"/>
</dbReference>
<dbReference type="Ensembl" id="ENST00000531743.5">
    <property type="protein sequence ID" value="ENSP00000431822.1"/>
    <property type="gene ID" value="ENSG00000149806.11"/>
</dbReference>
<dbReference type="GeneID" id="2197"/>
<dbReference type="KEGG" id="hsa:2197"/>
<dbReference type="MANE-Select" id="ENST00000529639.6">
    <property type="protein sequence ID" value="ENSP00000435370.1"/>
    <property type="RefSeq nucleotide sequence ID" value="NM_001997.5"/>
    <property type="RefSeq protein sequence ID" value="NP_001988.1"/>
</dbReference>
<dbReference type="UCSC" id="uc001ocx.4">
    <property type="organism name" value="human"/>
</dbReference>
<dbReference type="AGR" id="HGNC:3597"/>
<dbReference type="CTD" id="2197"/>
<dbReference type="DisGeNET" id="2197"/>
<dbReference type="GeneCards" id="FAU"/>
<dbReference type="HGNC" id="HGNC:3597">
    <property type="gene designation" value="FAU"/>
</dbReference>
<dbReference type="HPA" id="ENSG00000149806">
    <property type="expression patterns" value="Low tissue specificity"/>
</dbReference>
<dbReference type="MIM" id="134690">
    <property type="type" value="gene"/>
</dbReference>
<dbReference type="neXtProt" id="NX_P62861"/>
<dbReference type="OpenTargets" id="ENSG00000149806"/>
<dbReference type="PharmGKB" id="PA28010"/>
<dbReference type="VEuPathDB" id="HostDB:ENSG00000149806"/>
<dbReference type="eggNOG" id="KOG0001">
    <property type="taxonomic scope" value="Eukaryota"/>
</dbReference>
<dbReference type="eggNOG" id="KOG0009">
    <property type="taxonomic scope" value="Eukaryota"/>
</dbReference>
<dbReference type="GeneTree" id="ENSGT00390000007479"/>
<dbReference type="InParanoid" id="P62861"/>
<dbReference type="OMA" id="FRRIQYT"/>
<dbReference type="OrthoDB" id="9483332at2759"/>
<dbReference type="TreeFam" id="TF313779"/>
<dbReference type="PathwayCommons" id="P62861"/>
<dbReference type="Reactome" id="R-HSA-156827">
    <property type="pathway name" value="L13a-mediated translational silencing of Ceruloplasmin expression"/>
</dbReference>
<dbReference type="Reactome" id="R-HSA-156902">
    <property type="pathway name" value="Peptide chain elongation"/>
</dbReference>
<dbReference type="Reactome" id="R-HSA-1799339">
    <property type="pathway name" value="SRP-dependent cotranslational protein targeting to membrane"/>
</dbReference>
<dbReference type="Reactome" id="R-HSA-192823">
    <property type="pathway name" value="Viral mRNA Translation"/>
</dbReference>
<dbReference type="Reactome" id="R-HSA-2408557">
    <property type="pathway name" value="Selenocysteine synthesis"/>
</dbReference>
<dbReference type="Reactome" id="R-HSA-6791226">
    <property type="pathway name" value="Major pathway of rRNA processing in the nucleolus and cytosol"/>
</dbReference>
<dbReference type="Reactome" id="R-HSA-72649">
    <property type="pathway name" value="Translation initiation complex formation"/>
</dbReference>
<dbReference type="Reactome" id="R-HSA-72689">
    <property type="pathway name" value="Formation of a pool of free 40S subunits"/>
</dbReference>
<dbReference type="Reactome" id="R-HSA-72695">
    <property type="pathway name" value="Formation of the ternary complex, and subsequently, the 43S complex"/>
</dbReference>
<dbReference type="Reactome" id="R-HSA-72702">
    <property type="pathway name" value="Ribosomal scanning and start codon recognition"/>
</dbReference>
<dbReference type="Reactome" id="R-HSA-72706">
    <property type="pathway name" value="GTP hydrolysis and joining of the 60S ribosomal subunit"/>
</dbReference>
<dbReference type="Reactome" id="R-HSA-72764">
    <property type="pathway name" value="Eukaryotic Translation Termination"/>
</dbReference>
<dbReference type="Reactome" id="R-HSA-9010553">
    <property type="pathway name" value="Regulation of expression of SLITs and ROBOs"/>
</dbReference>
<dbReference type="Reactome" id="R-HSA-9633012">
    <property type="pathway name" value="Response of EIF2AK4 (GCN2) to amino acid deficiency"/>
</dbReference>
<dbReference type="Reactome" id="R-HSA-9735869">
    <property type="pathway name" value="SARS-CoV-1 modulates host translation machinery"/>
</dbReference>
<dbReference type="Reactome" id="R-HSA-9754678">
    <property type="pathway name" value="SARS-CoV-2 modulates host translation machinery"/>
</dbReference>
<dbReference type="Reactome" id="R-HSA-975956">
    <property type="pathway name" value="Nonsense Mediated Decay (NMD) independent of the Exon Junction Complex (EJC)"/>
</dbReference>
<dbReference type="Reactome" id="R-HSA-975957">
    <property type="pathway name" value="Nonsense Mediated Decay (NMD) enhanced by the Exon Junction Complex (EJC)"/>
</dbReference>
<dbReference type="SignaLink" id="P62861"/>
<dbReference type="SIGNOR" id="P62861"/>
<dbReference type="BioGRID-ORCS" id="2197">
    <property type="hits" value="752 hits in 1129 CRISPR screens"/>
</dbReference>
<dbReference type="CD-CODE" id="91857CE7">
    <property type="entry name" value="Nucleolus"/>
</dbReference>
<dbReference type="ChiTaRS" id="FAU">
    <property type="organism name" value="human"/>
</dbReference>
<dbReference type="EvolutionaryTrace" id="P62861"/>
<dbReference type="GeneWiki" id="FAU_(gene)"/>
<dbReference type="GenomeRNAi" id="2197"/>
<dbReference type="Pharos" id="P62861">
    <property type="development level" value="Tbio"/>
</dbReference>
<dbReference type="PRO" id="PR:P62861"/>
<dbReference type="Proteomes" id="UP000005640">
    <property type="component" value="Chromosome 11"/>
</dbReference>
<dbReference type="Bgee" id="ENSG00000149806">
    <property type="expression patterns" value="Expressed in granulocyte and 99 other cell types or tissues"/>
</dbReference>
<dbReference type="ExpressionAtlas" id="P62861">
    <property type="expression patterns" value="baseline and differential"/>
</dbReference>
<dbReference type="GO" id="GO:0005737">
    <property type="term" value="C:cytoplasm"/>
    <property type="evidence" value="ECO:0000318"/>
    <property type="project" value="GO_Central"/>
</dbReference>
<dbReference type="GO" id="GO:0005829">
    <property type="term" value="C:cytosol"/>
    <property type="evidence" value="ECO:0000304"/>
    <property type="project" value="Reactome"/>
</dbReference>
<dbReference type="GO" id="GO:0022626">
    <property type="term" value="C:cytosolic ribosome"/>
    <property type="evidence" value="ECO:0000314"/>
    <property type="project" value="FlyBase"/>
</dbReference>
<dbReference type="GO" id="GO:0022627">
    <property type="term" value="C:cytosolic small ribosomal subunit"/>
    <property type="evidence" value="ECO:0000314"/>
    <property type="project" value="UniProtKB"/>
</dbReference>
<dbReference type="GO" id="GO:0005615">
    <property type="term" value="C:extracellular space"/>
    <property type="evidence" value="ECO:0000314"/>
    <property type="project" value="UniProtKB"/>
</dbReference>
<dbReference type="GO" id="GO:0005654">
    <property type="term" value="C:nucleoplasm"/>
    <property type="evidence" value="ECO:0000304"/>
    <property type="project" value="Reactome"/>
</dbReference>
<dbReference type="GO" id="GO:0005634">
    <property type="term" value="C:nucleus"/>
    <property type="evidence" value="ECO:0000318"/>
    <property type="project" value="GO_Central"/>
</dbReference>
<dbReference type="GO" id="GO:0015935">
    <property type="term" value="C:small ribosomal subunit"/>
    <property type="evidence" value="ECO:0007005"/>
    <property type="project" value="UniProtKB"/>
</dbReference>
<dbReference type="GO" id="GO:0031386">
    <property type="term" value="F:protein tag activity"/>
    <property type="evidence" value="ECO:0000318"/>
    <property type="project" value="GO_Central"/>
</dbReference>
<dbReference type="GO" id="GO:0003723">
    <property type="term" value="F:RNA binding"/>
    <property type="evidence" value="ECO:0007005"/>
    <property type="project" value="UniProtKB"/>
</dbReference>
<dbReference type="GO" id="GO:0003735">
    <property type="term" value="F:structural constituent of ribosome"/>
    <property type="evidence" value="ECO:0000314"/>
    <property type="project" value="FlyBase"/>
</dbReference>
<dbReference type="GO" id="GO:0031625">
    <property type="term" value="F:ubiquitin protein ligase binding"/>
    <property type="evidence" value="ECO:0000318"/>
    <property type="project" value="GO_Central"/>
</dbReference>
<dbReference type="GO" id="GO:0019731">
    <property type="term" value="P:antibacterial humoral response"/>
    <property type="evidence" value="ECO:0000314"/>
    <property type="project" value="UniProtKB"/>
</dbReference>
<dbReference type="GO" id="GO:0061844">
    <property type="term" value="P:antimicrobial humoral immune response mediated by antimicrobial peptide"/>
    <property type="evidence" value="ECO:0000314"/>
    <property type="project" value="UniProtKB"/>
</dbReference>
<dbReference type="GO" id="GO:0002181">
    <property type="term" value="P:cytoplasmic translation"/>
    <property type="evidence" value="ECO:0000303"/>
    <property type="project" value="ComplexPortal"/>
</dbReference>
<dbReference type="GO" id="GO:0050830">
    <property type="term" value="P:defense response to Gram-positive bacterium"/>
    <property type="evidence" value="ECO:0000314"/>
    <property type="project" value="UniProtKB"/>
</dbReference>
<dbReference type="GO" id="GO:0002227">
    <property type="term" value="P:innate immune response in mucosa"/>
    <property type="evidence" value="ECO:0000314"/>
    <property type="project" value="UniProtKB"/>
</dbReference>
<dbReference type="GO" id="GO:0019941">
    <property type="term" value="P:modification-dependent protein catabolic process"/>
    <property type="evidence" value="ECO:0000318"/>
    <property type="project" value="GO_Central"/>
</dbReference>
<dbReference type="GO" id="GO:0016567">
    <property type="term" value="P:protein ubiquitination"/>
    <property type="evidence" value="ECO:0000318"/>
    <property type="project" value="GO_Central"/>
</dbReference>
<dbReference type="GO" id="GO:0006412">
    <property type="term" value="P:translation"/>
    <property type="evidence" value="ECO:0000305"/>
    <property type="project" value="UniProtKB"/>
</dbReference>
<dbReference type="CDD" id="cd01793">
    <property type="entry name" value="Ubl_FUBI"/>
    <property type="match status" value="1"/>
</dbReference>
<dbReference type="FunFam" id="3.10.20.90:FF:000114">
    <property type="entry name" value="40S ribosomal protein S30"/>
    <property type="match status" value="1"/>
</dbReference>
<dbReference type="Gene3D" id="3.10.20.90">
    <property type="entry name" value="Phosphatidylinositol 3-kinase Catalytic Subunit, Chain A, domain 1"/>
    <property type="match status" value="1"/>
</dbReference>
<dbReference type="InterPro" id="IPR039415">
    <property type="entry name" value="FUBI"/>
</dbReference>
<dbReference type="InterPro" id="IPR006846">
    <property type="entry name" value="Ribosomal_eS30"/>
</dbReference>
<dbReference type="InterPro" id="IPR000626">
    <property type="entry name" value="Ubiquitin-like_dom"/>
</dbReference>
<dbReference type="InterPro" id="IPR029071">
    <property type="entry name" value="Ubiquitin-like_domsf"/>
</dbReference>
<dbReference type="InterPro" id="IPR019954">
    <property type="entry name" value="Ubiquitin_CS"/>
</dbReference>
<dbReference type="InterPro" id="IPR019956">
    <property type="entry name" value="Ubiquitin_dom"/>
</dbReference>
<dbReference type="PANTHER" id="PTHR12650">
    <property type="entry name" value="40S RIBOSOMAL PROTEIN S30/UBIQUITIN-LIKE PROTEIN FUBI"/>
    <property type="match status" value="1"/>
</dbReference>
<dbReference type="PANTHER" id="PTHR12650:SF15">
    <property type="entry name" value="RIBOSOMAL PROTEIN S30, ISOFORM A"/>
    <property type="match status" value="1"/>
</dbReference>
<dbReference type="Pfam" id="PF04758">
    <property type="entry name" value="Ribosomal_S30"/>
    <property type="match status" value="1"/>
</dbReference>
<dbReference type="Pfam" id="PF00240">
    <property type="entry name" value="ubiquitin"/>
    <property type="match status" value="1"/>
</dbReference>
<dbReference type="PRINTS" id="PR00348">
    <property type="entry name" value="UBIQUITIN"/>
</dbReference>
<dbReference type="SMART" id="SM00213">
    <property type="entry name" value="UBQ"/>
    <property type="match status" value="1"/>
</dbReference>
<dbReference type="SUPFAM" id="SSF54236">
    <property type="entry name" value="Ubiquitin-like"/>
    <property type="match status" value="1"/>
</dbReference>
<dbReference type="PROSITE" id="PS00299">
    <property type="entry name" value="UBIQUITIN_1"/>
    <property type="match status" value="1"/>
</dbReference>
<dbReference type="PROSITE" id="PS50053">
    <property type="entry name" value="UBIQUITIN_2"/>
    <property type="match status" value="1"/>
</dbReference>
<feature type="chain" id="PRO_0000173999" description="Ubiquitin-like FUBI-ribosomal protein eS30 fusion protein">
    <location>
        <begin position="1"/>
        <end position="133"/>
    </location>
</feature>
<feature type="chain" id="PRO_0000455003" description="Ubiquitin-like protein FUBI">
    <location>
        <begin position="1"/>
        <end position="74"/>
    </location>
</feature>
<feature type="chain" id="PRO_0000455004" description="Small ribosomal subunit protein eS30">
    <location>
        <begin position="75"/>
        <end position="133"/>
    </location>
</feature>
<feature type="domain" description="Ubiquitin-like" evidence="2">
    <location>
        <begin position="1"/>
        <end position="74"/>
    </location>
</feature>
<feature type="region of interest" description="Disordered" evidence="3">
    <location>
        <begin position="84"/>
        <end position="110"/>
    </location>
</feature>
<feature type="compositionally biased region" description="Basic residues" evidence="3">
    <location>
        <begin position="97"/>
        <end position="110"/>
    </location>
</feature>
<feature type="modified residue" description="N6-succinyllysine" evidence="1">
    <location>
        <position position="125"/>
    </location>
</feature>
<feature type="sequence variant" id="VAR_019644" description="In dbSNP:rs13807." evidence="8">
    <original>T</original>
    <variation>I</variation>
    <location>
        <position position="53"/>
    </location>
</feature>
<feature type="sequence variant" id="VAR_019643" evidence="8">
    <original>V</original>
    <variation>M</variation>
    <location>
        <position position="93"/>
    </location>
</feature>
<feature type="mutagenesis site" description="Abolishes FUBI-ribosomal protein S30 processing; when associated with A-74. Impairs 40S ribosome biogenesis." evidence="7">
    <original>G</original>
    <variation>A</variation>
    <location>
        <position position="73"/>
    </location>
</feature>
<feature type="mutagenesis site" description="Abolishes FUBI-ribosomal protein S30 processing; when associated with A-73. Impairs 40S ribosome biogenesis." evidence="7">
    <original>G</original>
    <variation>A</variation>
    <location>
        <position position="74"/>
    </location>
</feature>
<feature type="mutagenesis site" description="Abolishes FUBI-ribosomal protein S30 processing. Impairs 40S ribosome biogenesis." evidence="7">
    <original>G</original>
    <variation>V</variation>
    <location>
        <position position="74"/>
    </location>
</feature>
<feature type="strand" evidence="15">
    <location>
        <begin position="2"/>
        <end position="14"/>
    </location>
</feature>
<feature type="helix" evidence="15">
    <location>
        <begin position="21"/>
        <end position="32"/>
    </location>
</feature>
<feature type="helix" evidence="15">
    <location>
        <begin position="36"/>
        <end position="38"/>
    </location>
</feature>
<feature type="strand" evidence="15">
    <location>
        <begin position="39"/>
        <end position="43"/>
    </location>
</feature>
<feature type="helix" evidence="15">
    <location>
        <begin position="54"/>
        <end position="57"/>
    </location>
</feature>
<feature type="strand" evidence="15">
    <location>
        <begin position="64"/>
        <end position="69"/>
    </location>
</feature>
<feature type="turn" evidence="14">
    <location>
        <begin position="81"/>
        <end position="84"/>
    </location>
</feature>
<feature type="helix" evidence="14">
    <location>
        <begin position="85"/>
        <end position="89"/>
    </location>
</feature>
<feature type="helix" evidence="14">
    <location>
        <begin position="104"/>
        <end position="116"/>
    </location>
</feature>
<feature type="strand" evidence="13">
    <location>
        <begin position="121"/>
        <end position="123"/>
    </location>
</feature>
<gene>
    <name evidence="12" type="primary">FAU</name>
</gene>
<comment type="function">
    <molecule>Ubiquitin-like protein FUBI</molecule>
    <text evidence="5">May have pro-apoptotic activity.</text>
</comment>
<comment type="function">
    <molecule>Small ribosomal subunit protein eS30</molecule>
    <text evidence="6 7">Component of the 40S subunit of the ribosome. Contributes to the assembly and function of 40S ribosomal subunits.</text>
</comment>
<comment type="subunit">
    <molecule>Small ribosomal subunit protein eS30</molecule>
    <text evidence="6 7">Component of the 40S subunit of the ribosome.</text>
</comment>
<comment type="interaction">
    <interactant intactId="EBI-358093">
        <id>P62861</id>
    </interactant>
    <interactant intactId="EBI-2432309">
        <id>Q92876</id>
        <label>KLK6</label>
    </interactant>
    <organismsDiffer>false</organismsDiffer>
    <experiments>3</experiments>
</comment>
<comment type="subcellular location">
    <molecule>Small ribosomal subunit protein eS30</molecule>
    <subcellularLocation>
        <location evidence="6">Cytoplasm</location>
    </subcellularLocation>
    <subcellularLocation>
        <location evidence="7">Nucleus</location>
    </subcellularLocation>
</comment>
<comment type="PTM">
    <text evidence="7">FUBI is cleaved from ribosomal protein S30 by the deubiquitinase USP36 before the assembly of ribosomal protein S30 into pre-40S ribosomal particles. FUBI removal from ribosomal protein S30 is a crucial event for the final maturation of pre-40S particles.</text>
</comment>
<comment type="miscellaneous">
    <text evidence="4 11">FAU encodes a fusion protein consisting of the ubiquitin-like protein FUBI at the N terminus and ribosomal protein S30 at the C terminus.</text>
</comment>
<comment type="miscellaneous">
    <molecule>Ubiquitin-like protein FUBI</molecule>
    <text evidence="10">Lacks the typical lysine residues that participate in Ub's polyubiquitination. However contains a C-terminal di-glycine signature after its proteolytic separation from ribosomal protein S30 and could theoretically be conjugated onto target proteins.</text>
</comment>
<comment type="similarity">
    <text evidence="10">In the N-terminal section; belongs to the ubiquitin family.</text>
</comment>
<comment type="similarity">
    <text evidence="10">In the C-terminal section; belongs to the eukaryotic ribosomal protein eS30 family.</text>
</comment>
<comment type="online information" name="Atlas of Genetics and Cytogenetics in Oncology and Haematology">
    <link uri="https://atlasgeneticsoncology.org/gene/40538/FAU"/>
</comment>
<proteinExistence type="evidence at protein level"/>
<evidence type="ECO:0000250" key="1">
    <source>
        <dbReference type="UniProtKB" id="P62862"/>
    </source>
</evidence>
<evidence type="ECO:0000255" key="2">
    <source>
        <dbReference type="PROSITE-ProRule" id="PRU00214"/>
    </source>
</evidence>
<evidence type="ECO:0000256" key="3">
    <source>
        <dbReference type="SAM" id="MobiDB-lite"/>
    </source>
</evidence>
<evidence type="ECO:0000269" key="4">
    <source>
    </source>
</evidence>
<evidence type="ECO:0000269" key="5">
    <source>
    </source>
</evidence>
<evidence type="ECO:0000269" key="6">
    <source>
    </source>
</evidence>
<evidence type="ECO:0000269" key="7">
    <source>
    </source>
</evidence>
<evidence type="ECO:0000269" key="8">
    <source ref="5"/>
</evidence>
<evidence type="ECO:0000303" key="9">
    <source>
    </source>
</evidence>
<evidence type="ECO:0000305" key="10"/>
<evidence type="ECO:0000305" key="11">
    <source>
    </source>
</evidence>
<evidence type="ECO:0000312" key="12">
    <source>
        <dbReference type="HGNC" id="HGNC:3597"/>
    </source>
</evidence>
<evidence type="ECO:0007829" key="13">
    <source>
        <dbReference type="PDB" id="6ZN5"/>
    </source>
</evidence>
<evidence type="ECO:0007829" key="14">
    <source>
        <dbReference type="PDB" id="7R4X"/>
    </source>
</evidence>
<evidence type="ECO:0007829" key="15">
    <source>
        <dbReference type="PDB" id="8BS3"/>
    </source>
</evidence>
<reference key="1">
    <citation type="journal article" date="1992" name="Biochem. Biophys. Res. Commun.">
        <title>Genomic structure and expression of the human fau gene: encoding the ribosomal protein S30 fused to a ubiquitin-like protein.</title>
        <authorList>
            <person name="Kas K."/>
            <person name="Michiels L."/>
            <person name="Merregaert J."/>
        </authorList>
    </citation>
    <scope>NUCLEOTIDE SEQUENCE [GENOMIC DNA]</scope>
</reference>
<reference key="2">
    <citation type="journal article" date="1993" name="Oncogene">
        <title>fau cDNA encodes a ubiquitin-like-S30 fusion protein and is expressed as an antisense sequence in the Finkel-Biskis-Reilly murine sarcoma virus.</title>
        <authorList>
            <person name="Michiels L."/>
            <person name="van der Rauwelaert E."/>
            <person name="van Hasselt F."/>
            <person name="Kas K."/>
            <person name="Merregaert J."/>
        </authorList>
    </citation>
    <scope>NUCLEOTIDE SEQUENCE [MRNA]</scope>
</reference>
<reference key="3">
    <citation type="journal article" date="2004" name="Nat. Genet.">
        <title>Complete sequencing and characterization of 21,243 full-length human cDNAs.</title>
        <authorList>
            <person name="Ota T."/>
            <person name="Suzuki Y."/>
            <person name="Nishikawa T."/>
            <person name="Otsuki T."/>
            <person name="Sugiyama T."/>
            <person name="Irie R."/>
            <person name="Wakamatsu A."/>
            <person name="Hayashi K."/>
            <person name="Sato H."/>
            <person name="Nagai K."/>
            <person name="Kimura K."/>
            <person name="Makita H."/>
            <person name="Sekine M."/>
            <person name="Obayashi M."/>
            <person name="Nishi T."/>
            <person name="Shibahara T."/>
            <person name="Tanaka T."/>
            <person name="Ishii S."/>
            <person name="Yamamoto J."/>
            <person name="Saito K."/>
            <person name="Kawai Y."/>
            <person name="Isono Y."/>
            <person name="Nakamura Y."/>
            <person name="Nagahari K."/>
            <person name="Murakami K."/>
            <person name="Yasuda T."/>
            <person name="Iwayanagi T."/>
            <person name="Wagatsuma M."/>
            <person name="Shiratori A."/>
            <person name="Sudo H."/>
            <person name="Hosoiri T."/>
            <person name="Kaku Y."/>
            <person name="Kodaira H."/>
            <person name="Kondo H."/>
            <person name="Sugawara M."/>
            <person name="Takahashi M."/>
            <person name="Kanda K."/>
            <person name="Yokoi T."/>
            <person name="Furuya T."/>
            <person name="Kikkawa E."/>
            <person name="Omura Y."/>
            <person name="Abe K."/>
            <person name="Kamihara K."/>
            <person name="Katsuta N."/>
            <person name="Sato K."/>
            <person name="Tanikawa M."/>
            <person name="Yamazaki M."/>
            <person name="Ninomiya K."/>
            <person name="Ishibashi T."/>
            <person name="Yamashita H."/>
            <person name="Murakawa K."/>
            <person name="Fujimori K."/>
            <person name="Tanai H."/>
            <person name="Kimata M."/>
            <person name="Watanabe M."/>
            <person name="Hiraoka S."/>
            <person name="Chiba Y."/>
            <person name="Ishida S."/>
            <person name="Ono Y."/>
            <person name="Takiguchi S."/>
            <person name="Watanabe S."/>
            <person name="Yosida M."/>
            <person name="Hotuta T."/>
            <person name="Kusano J."/>
            <person name="Kanehori K."/>
            <person name="Takahashi-Fujii A."/>
            <person name="Hara H."/>
            <person name="Tanase T.-O."/>
            <person name="Nomura Y."/>
            <person name="Togiya S."/>
            <person name="Komai F."/>
            <person name="Hara R."/>
            <person name="Takeuchi K."/>
            <person name="Arita M."/>
            <person name="Imose N."/>
            <person name="Musashino K."/>
            <person name="Yuuki H."/>
            <person name="Oshima A."/>
            <person name="Sasaki N."/>
            <person name="Aotsuka S."/>
            <person name="Yoshikawa Y."/>
            <person name="Matsunawa H."/>
            <person name="Ichihara T."/>
            <person name="Shiohata N."/>
            <person name="Sano S."/>
            <person name="Moriya S."/>
            <person name="Momiyama H."/>
            <person name="Satoh N."/>
            <person name="Takami S."/>
            <person name="Terashima Y."/>
            <person name="Suzuki O."/>
            <person name="Nakagawa S."/>
            <person name="Senoh A."/>
            <person name="Mizoguchi H."/>
            <person name="Goto Y."/>
            <person name="Shimizu F."/>
            <person name="Wakebe H."/>
            <person name="Hishigaki H."/>
            <person name="Watanabe T."/>
            <person name="Sugiyama A."/>
            <person name="Takemoto M."/>
            <person name="Kawakami B."/>
            <person name="Yamazaki M."/>
            <person name="Watanabe K."/>
            <person name="Kumagai A."/>
            <person name="Itakura S."/>
            <person name="Fukuzumi Y."/>
            <person name="Fujimori Y."/>
            <person name="Komiyama M."/>
            <person name="Tashiro H."/>
            <person name="Tanigami A."/>
            <person name="Fujiwara T."/>
            <person name="Ono T."/>
            <person name="Yamada K."/>
            <person name="Fujii Y."/>
            <person name="Ozaki K."/>
            <person name="Hirao M."/>
            <person name="Ohmori Y."/>
            <person name="Kawabata A."/>
            <person name="Hikiji T."/>
            <person name="Kobatake N."/>
            <person name="Inagaki H."/>
            <person name="Ikema Y."/>
            <person name="Okamoto S."/>
            <person name="Okitani R."/>
            <person name="Kawakami T."/>
            <person name="Noguchi S."/>
            <person name="Itoh T."/>
            <person name="Shigeta K."/>
            <person name="Senba T."/>
            <person name="Matsumura K."/>
            <person name="Nakajima Y."/>
            <person name="Mizuno T."/>
            <person name="Morinaga M."/>
            <person name="Sasaki M."/>
            <person name="Togashi T."/>
            <person name="Oyama M."/>
            <person name="Hata H."/>
            <person name="Watanabe M."/>
            <person name="Komatsu T."/>
            <person name="Mizushima-Sugano J."/>
            <person name="Satoh T."/>
            <person name="Shirai Y."/>
            <person name="Takahashi Y."/>
            <person name="Nakagawa K."/>
            <person name="Okumura K."/>
            <person name="Nagase T."/>
            <person name="Nomura N."/>
            <person name="Kikuchi H."/>
            <person name="Masuho Y."/>
            <person name="Yamashita R."/>
            <person name="Nakai K."/>
            <person name="Yada T."/>
            <person name="Nakamura Y."/>
            <person name="Ohara O."/>
            <person name="Isogai T."/>
            <person name="Sugano S."/>
        </authorList>
    </citation>
    <scope>NUCLEOTIDE SEQUENCE [LARGE SCALE MRNA]</scope>
</reference>
<reference key="4">
    <citation type="submission" date="2004-06" db="EMBL/GenBank/DDBJ databases">
        <title>Cloning of human full open reading frames in Gateway(TM) system entry vector (pDONR201).</title>
        <authorList>
            <person name="Halleck A."/>
            <person name="Ebert L."/>
            <person name="Mkoundinya M."/>
            <person name="Schick M."/>
            <person name="Eisenstein S."/>
            <person name="Neubert P."/>
            <person name="Kstrang K."/>
            <person name="Schatten R."/>
            <person name="Shen B."/>
            <person name="Henze S."/>
            <person name="Mar W."/>
            <person name="Korn B."/>
            <person name="Zuo D."/>
            <person name="Hu Y."/>
            <person name="LaBaer J."/>
        </authorList>
    </citation>
    <scope>NUCLEOTIDE SEQUENCE [LARGE SCALE MRNA]</scope>
</reference>
<reference key="5">
    <citation type="submission" date="2003-09" db="EMBL/GenBank/DDBJ databases">
        <authorList>
            <consortium name="NIEHS SNPs program"/>
        </authorList>
    </citation>
    <scope>NUCLEOTIDE SEQUENCE [GENOMIC DNA]</scope>
    <scope>VARIANTS ILE-53 AND MET-93</scope>
</reference>
<reference key="6">
    <citation type="journal article" date="2006" name="Nature">
        <title>Human chromosome 11 DNA sequence and analysis including novel gene identification.</title>
        <authorList>
            <person name="Taylor T.D."/>
            <person name="Noguchi H."/>
            <person name="Totoki Y."/>
            <person name="Toyoda A."/>
            <person name="Kuroki Y."/>
            <person name="Dewar K."/>
            <person name="Lloyd C."/>
            <person name="Itoh T."/>
            <person name="Takeda T."/>
            <person name="Kim D.-W."/>
            <person name="She X."/>
            <person name="Barlow K.F."/>
            <person name="Bloom T."/>
            <person name="Bruford E."/>
            <person name="Chang J.L."/>
            <person name="Cuomo C.A."/>
            <person name="Eichler E."/>
            <person name="FitzGerald M.G."/>
            <person name="Jaffe D.B."/>
            <person name="LaButti K."/>
            <person name="Nicol R."/>
            <person name="Park H.-S."/>
            <person name="Seaman C."/>
            <person name="Sougnez C."/>
            <person name="Yang X."/>
            <person name="Zimmer A.R."/>
            <person name="Zody M.C."/>
            <person name="Birren B.W."/>
            <person name="Nusbaum C."/>
            <person name="Fujiyama A."/>
            <person name="Hattori M."/>
            <person name="Rogers J."/>
            <person name="Lander E.S."/>
            <person name="Sakaki Y."/>
        </authorList>
    </citation>
    <scope>NUCLEOTIDE SEQUENCE [LARGE SCALE GENOMIC DNA]</scope>
</reference>
<reference key="7">
    <citation type="journal article" date="2004" name="Genome Res.">
        <title>The status, quality, and expansion of the NIH full-length cDNA project: the Mammalian Gene Collection (MGC).</title>
        <authorList>
            <consortium name="The MGC Project Team"/>
        </authorList>
    </citation>
    <scope>NUCLEOTIDE SEQUENCE [LARGE SCALE MRNA]</scope>
    <source>
        <tissue>Colon</tissue>
    </source>
</reference>
<reference key="8">
    <citation type="journal article" date="1996" name="Eur. J. Biochem.">
        <title>Characterization of the human small-ribosomal-subunit proteins by N-terminal and internal sequencing, and mass spectrometry.</title>
        <authorList>
            <person name="Vladimirov S.N."/>
            <person name="Ivanov A.V."/>
            <person name="Karpova G.G."/>
            <person name="Musolyamov A.K."/>
            <person name="Egorov T.A."/>
            <person name="Thiede B."/>
            <person name="Wittmann-Liebold B."/>
            <person name="Otto A."/>
        </authorList>
    </citation>
    <scope>PROTEIN SEQUENCE OF 75-99</scope>
    <source>
        <tissue>Placenta</tissue>
    </source>
</reference>
<reference key="9">
    <citation type="journal article" date="2009" name="Science">
        <title>Lysine acetylation targets protein complexes and co-regulates major cellular functions.</title>
        <authorList>
            <person name="Choudhary C."/>
            <person name="Kumar C."/>
            <person name="Gnad F."/>
            <person name="Nielsen M.L."/>
            <person name="Rehman M."/>
            <person name="Walther T.C."/>
            <person name="Olsen J.V."/>
            <person name="Mann M."/>
        </authorList>
    </citation>
    <scope>IDENTIFICATION BY MASS SPECTROMETRY [LARGE SCALE ANALYSIS]</scope>
</reference>
<reference key="10">
    <citation type="journal article" date="2011" name="Biochim. Biophys. Acta">
        <title>Candidate tumour suppressor Fau regulates apoptosis in human cells: an essential role for Bcl-G.</title>
        <authorList>
            <person name="Pickard M.R."/>
            <person name="Mourtada-Maarabouni M."/>
            <person name="Williams G.T."/>
        </authorList>
    </citation>
    <scope>FUNCTION</scope>
</reference>
<reference key="11">
    <citation type="journal article" date="2011" name="BMC Syst. Biol.">
        <title>Initial characterization of the human central proteome.</title>
        <authorList>
            <person name="Burkard T.R."/>
            <person name="Planyavsky M."/>
            <person name="Kaupe I."/>
            <person name="Breitwieser F.P."/>
            <person name="Buerckstuemmer T."/>
            <person name="Bennett K.L."/>
            <person name="Superti-Furga G."/>
            <person name="Colinge J."/>
        </authorList>
    </citation>
    <scope>IDENTIFICATION BY MASS SPECTROMETRY [LARGE SCALE ANALYSIS]</scope>
</reference>
<reference key="12">
    <citation type="journal article" date="2014" name="Curr. Opin. Struct. Biol.">
        <title>A new system for naming ribosomal proteins.</title>
        <authorList>
            <person name="Ban N."/>
            <person name="Beckmann R."/>
            <person name="Cate J.H.D."/>
            <person name="Dinman J.D."/>
            <person name="Dragon F."/>
            <person name="Ellis S.R."/>
            <person name="Lafontaine D.L.J."/>
            <person name="Lindahl L."/>
            <person name="Liljas A."/>
            <person name="Lipton J.M."/>
            <person name="McAlear M.A."/>
            <person name="Moore P.B."/>
            <person name="Noller H.F."/>
            <person name="Ortega J."/>
            <person name="Panse V.G."/>
            <person name="Ramakrishnan V."/>
            <person name="Spahn C.M.T."/>
            <person name="Steitz T.A."/>
            <person name="Tchorzewski M."/>
            <person name="Tollervey D."/>
            <person name="Warren A.J."/>
            <person name="Williamson J.R."/>
            <person name="Wilson D."/>
            <person name="Yonath A."/>
            <person name="Yusupov M."/>
        </authorList>
    </citation>
    <scope>NOMENCLATURE</scope>
</reference>
<reference key="13">
    <citation type="journal article" date="2015" name="Proteomics">
        <title>N-terminome analysis of the human mitochondrial proteome.</title>
        <authorList>
            <person name="Vaca Jacome A.S."/>
            <person name="Rabilloud T."/>
            <person name="Schaeffer-Reiss C."/>
            <person name="Rompais M."/>
            <person name="Ayoub D."/>
            <person name="Lane L."/>
            <person name="Bairoch A."/>
            <person name="Van Dorsselaer A."/>
            <person name="Carapito C."/>
        </authorList>
    </citation>
    <scope>IDENTIFICATION BY MASS SPECTROMETRY [LARGE SCALE ANALYSIS]</scope>
</reference>
<reference key="14">
    <citation type="submission" date="2011-01" db="PDB data bank">
        <title>Solution NMR structure of N-terminal ubiquitin-like domain of FUBI, a ribosomal protein S30 precursor from Homo sapiens. Northeast structural genomics consortium (NESG) target HR6166.</title>
        <authorList>
            <consortium name="Northeast structural genomics consortium (NESG)"/>
        </authorList>
    </citation>
    <scope>STRUCTURE BY NMR</scope>
</reference>
<reference key="15">
    <citation type="journal article" date="2013" name="Nature">
        <title>Structures of the human and Drosophila 80S ribosome.</title>
        <authorList>
            <person name="Anger A.M."/>
            <person name="Armache J.P."/>
            <person name="Berninghausen O."/>
            <person name="Habeck M."/>
            <person name="Subklewe M."/>
            <person name="Wilson D.N."/>
            <person name="Beckmann R."/>
        </authorList>
    </citation>
    <scope>STRUCTURE BY ELECTRON MICROSCOPY (5.0 ANGSTROMS) OF 80S RIBOSOME</scope>
    <scope>FUNCTION</scope>
    <scope>SUBUNIT</scope>
    <scope>SUBCELLULAR LOCATION</scope>
</reference>
<reference key="16">
    <citation type="journal article" date="2021" name="Elife">
        <title>Processing of the ribosomal ubiquitin-like fusion protein FUBI-eS30/FAU is required for 40S maturation and depends on USP36.</title>
        <authorList>
            <person name="van den Heuvel J."/>
            <person name="Ashiono C."/>
            <person name="Gillet L.C."/>
            <person name="Doerner K."/>
            <person name="Wyler E."/>
            <person name="Zemp I."/>
            <person name="Kutay U."/>
        </authorList>
    </citation>
    <scope>PROTEOLYTIC CLEAVAGE</scope>
    <scope>MUTAGENESIS OF GLY-73 AND GLY-74</scope>
    <scope>SUBUNIT</scope>
    <scope>SUBCELLULAR LOCATION</scope>
</reference>